<evidence type="ECO:0000255" key="1">
    <source>
        <dbReference type="HAMAP-Rule" id="MF_02225"/>
    </source>
</evidence>
<keyword id="KW-0210">Decarboxylase</keyword>
<keyword id="KW-0285">Flavoprotein</keyword>
<keyword id="KW-0288">FMN</keyword>
<keyword id="KW-0436">Ligase</keyword>
<keyword id="KW-0456">Lyase</keyword>
<keyword id="KW-0460">Magnesium</keyword>
<keyword id="KW-0479">Metal-binding</keyword>
<keyword id="KW-0511">Multifunctional enzyme</keyword>
<keyword id="KW-1185">Reference proteome</keyword>
<protein>
    <recommendedName>
        <fullName evidence="1">Coenzyme A biosynthesis bifunctional protein CoaBC</fullName>
    </recommendedName>
    <alternativeName>
        <fullName evidence="1">DNA/pantothenate metabolism flavoprotein</fullName>
    </alternativeName>
    <alternativeName>
        <fullName evidence="1">Phosphopantothenoylcysteine synthetase/decarboxylase</fullName>
        <shortName evidence="1">PPCS-PPCDC</shortName>
    </alternativeName>
    <domain>
        <recommendedName>
            <fullName evidence="1">Phosphopantothenoylcysteine decarboxylase</fullName>
            <shortName evidence="1">PPC decarboxylase</shortName>
            <shortName evidence="1">PPC-DC</shortName>
            <ecNumber evidence="1">4.1.1.36</ecNumber>
        </recommendedName>
        <alternativeName>
            <fullName evidence="1">CoaC</fullName>
        </alternativeName>
    </domain>
    <domain>
        <recommendedName>
            <fullName evidence="1">Phosphopantothenate--cysteine ligase</fullName>
            <ecNumber evidence="1">6.3.2.5</ecNumber>
        </recommendedName>
        <alternativeName>
            <fullName evidence="1">CoaB</fullName>
        </alternativeName>
        <alternativeName>
            <fullName evidence="1">Phosphopantothenoylcysteine synthetase</fullName>
            <shortName evidence="1">PPC synthetase</shortName>
            <shortName evidence="1">PPC-S</shortName>
        </alternativeName>
    </domain>
</protein>
<proteinExistence type="inferred from homology"/>
<accession>Q9KVD1</accession>
<gene>
    <name evidence="1" type="primary">coaBC</name>
    <name type="ordered locus">VC_0215</name>
</gene>
<name>COABC_VIBCH</name>
<dbReference type="EC" id="4.1.1.36" evidence="1"/>
<dbReference type="EC" id="6.3.2.5" evidence="1"/>
<dbReference type="EMBL" id="AE003852">
    <property type="protein sequence ID" value="AAF93391.1"/>
    <property type="molecule type" value="Genomic_DNA"/>
</dbReference>
<dbReference type="PIR" id="A82351">
    <property type="entry name" value="A82351"/>
</dbReference>
<dbReference type="RefSeq" id="NP_229872.1">
    <property type="nucleotide sequence ID" value="NC_002505.1"/>
</dbReference>
<dbReference type="RefSeq" id="WP_001190972.1">
    <property type="nucleotide sequence ID" value="NZ_LT906614.1"/>
</dbReference>
<dbReference type="SMR" id="Q9KVD1"/>
<dbReference type="STRING" id="243277.VC_0215"/>
<dbReference type="DNASU" id="2614569"/>
<dbReference type="EnsemblBacteria" id="AAF93391">
    <property type="protein sequence ID" value="AAF93391"/>
    <property type="gene ID" value="VC_0215"/>
</dbReference>
<dbReference type="KEGG" id="vch:VC_0215"/>
<dbReference type="PATRIC" id="fig|243277.26.peg.197"/>
<dbReference type="eggNOG" id="COG0452">
    <property type="taxonomic scope" value="Bacteria"/>
</dbReference>
<dbReference type="HOGENOM" id="CLU_033319_0_1_6"/>
<dbReference type="UniPathway" id="UPA00241">
    <property type="reaction ID" value="UER00353"/>
</dbReference>
<dbReference type="UniPathway" id="UPA00241">
    <property type="reaction ID" value="UER00354"/>
</dbReference>
<dbReference type="Proteomes" id="UP000000584">
    <property type="component" value="Chromosome 1"/>
</dbReference>
<dbReference type="GO" id="GO:0071513">
    <property type="term" value="C:phosphopantothenoylcysteine decarboxylase complex"/>
    <property type="evidence" value="ECO:0000318"/>
    <property type="project" value="GO_Central"/>
</dbReference>
<dbReference type="GO" id="GO:0010181">
    <property type="term" value="F:FMN binding"/>
    <property type="evidence" value="ECO:0000318"/>
    <property type="project" value="GO_Central"/>
</dbReference>
<dbReference type="GO" id="GO:0046872">
    <property type="term" value="F:metal ion binding"/>
    <property type="evidence" value="ECO:0007669"/>
    <property type="project" value="UniProtKB-KW"/>
</dbReference>
<dbReference type="GO" id="GO:0004632">
    <property type="term" value="F:phosphopantothenate--cysteine ligase activity"/>
    <property type="evidence" value="ECO:0007669"/>
    <property type="project" value="UniProtKB-UniRule"/>
</dbReference>
<dbReference type="GO" id="GO:0004633">
    <property type="term" value="F:phosphopantothenoylcysteine decarboxylase activity"/>
    <property type="evidence" value="ECO:0000318"/>
    <property type="project" value="GO_Central"/>
</dbReference>
<dbReference type="GO" id="GO:0015937">
    <property type="term" value="P:coenzyme A biosynthetic process"/>
    <property type="evidence" value="ECO:0000318"/>
    <property type="project" value="GO_Central"/>
</dbReference>
<dbReference type="GO" id="GO:0015941">
    <property type="term" value="P:pantothenate catabolic process"/>
    <property type="evidence" value="ECO:0007669"/>
    <property type="project" value="InterPro"/>
</dbReference>
<dbReference type="Gene3D" id="3.40.50.10300">
    <property type="entry name" value="CoaB-like"/>
    <property type="match status" value="1"/>
</dbReference>
<dbReference type="Gene3D" id="3.40.50.1950">
    <property type="entry name" value="Flavin prenyltransferase-like"/>
    <property type="match status" value="1"/>
</dbReference>
<dbReference type="HAMAP" id="MF_02225">
    <property type="entry name" value="CoaBC"/>
    <property type="match status" value="1"/>
</dbReference>
<dbReference type="InterPro" id="IPR035929">
    <property type="entry name" value="CoaB-like_sf"/>
</dbReference>
<dbReference type="InterPro" id="IPR005252">
    <property type="entry name" value="CoaBC"/>
</dbReference>
<dbReference type="InterPro" id="IPR007085">
    <property type="entry name" value="DNA/pantothenate-metab_flavo_C"/>
</dbReference>
<dbReference type="InterPro" id="IPR036551">
    <property type="entry name" value="Flavin_trans-like"/>
</dbReference>
<dbReference type="InterPro" id="IPR003382">
    <property type="entry name" value="Flavoprotein"/>
</dbReference>
<dbReference type="NCBIfam" id="TIGR00521">
    <property type="entry name" value="coaBC_dfp"/>
    <property type="match status" value="1"/>
</dbReference>
<dbReference type="PANTHER" id="PTHR14359">
    <property type="entry name" value="HOMO-OLIGOMERIC FLAVIN CONTAINING CYS DECARBOXYLASE FAMILY"/>
    <property type="match status" value="1"/>
</dbReference>
<dbReference type="PANTHER" id="PTHR14359:SF6">
    <property type="entry name" value="PHOSPHOPANTOTHENOYLCYSTEINE DECARBOXYLASE"/>
    <property type="match status" value="1"/>
</dbReference>
<dbReference type="Pfam" id="PF04127">
    <property type="entry name" value="DFP"/>
    <property type="match status" value="1"/>
</dbReference>
<dbReference type="Pfam" id="PF02441">
    <property type="entry name" value="Flavoprotein"/>
    <property type="match status" value="1"/>
</dbReference>
<dbReference type="SUPFAM" id="SSF102645">
    <property type="entry name" value="CoaB-like"/>
    <property type="match status" value="1"/>
</dbReference>
<dbReference type="SUPFAM" id="SSF52507">
    <property type="entry name" value="Homo-oligomeric flavin-containing Cys decarboxylases, HFCD"/>
    <property type="match status" value="1"/>
</dbReference>
<sequence length="399" mass="42645">MQSLAGKKILLGISGGIAAYKCAELTRRLVERGATVQVVMTHAAKEFITPLTMQAVSGRPVSDSLLDPAAEASMGHIELAKWADLVLLAPATADLIARMAAGMGNDLLTTLILATSAPVAIAPAMNQQMYRNIATQENLQTLIRRGYLTWGPAAGEQACGDVGPGRMLEPMELVAHCENFFAPKILVGKRVLITAGPTREALDPVRYITNHSSGKMGFALAKAAAQLGADVTLVSGPVHLPTPVGVNRIDVQSGLEMHSAVMKEATSHQIFIACAAVADYRPQTVAEQKIKKSRDNDTLTIEMVKNPDIVASVAALTENRPFTVGFAAETQDVETYARSKLVRKNLDMICANDVSIAGQGFNSNDNALTLFWKEGQHSLPLTSKDALASAVMHLIHEQM</sequence>
<comment type="function">
    <text evidence="1">Catalyzes two sequential steps in the biosynthesis of coenzyme A. In the first step cysteine is conjugated to 4'-phosphopantothenate to form 4-phosphopantothenoylcysteine. In the second step the latter compound is decarboxylated to form 4'-phosphopantotheine.</text>
</comment>
<comment type="catalytic activity">
    <reaction evidence="1">
        <text>N-[(R)-4-phosphopantothenoyl]-L-cysteine + H(+) = (R)-4'-phosphopantetheine + CO2</text>
        <dbReference type="Rhea" id="RHEA:16793"/>
        <dbReference type="ChEBI" id="CHEBI:15378"/>
        <dbReference type="ChEBI" id="CHEBI:16526"/>
        <dbReference type="ChEBI" id="CHEBI:59458"/>
        <dbReference type="ChEBI" id="CHEBI:61723"/>
        <dbReference type="EC" id="4.1.1.36"/>
    </reaction>
</comment>
<comment type="catalytic activity">
    <reaction evidence="1">
        <text>(R)-4'-phosphopantothenate + L-cysteine + CTP = N-[(R)-4-phosphopantothenoyl]-L-cysteine + CMP + diphosphate + H(+)</text>
        <dbReference type="Rhea" id="RHEA:19397"/>
        <dbReference type="ChEBI" id="CHEBI:10986"/>
        <dbReference type="ChEBI" id="CHEBI:15378"/>
        <dbReference type="ChEBI" id="CHEBI:33019"/>
        <dbReference type="ChEBI" id="CHEBI:35235"/>
        <dbReference type="ChEBI" id="CHEBI:37563"/>
        <dbReference type="ChEBI" id="CHEBI:59458"/>
        <dbReference type="ChEBI" id="CHEBI:60377"/>
        <dbReference type="EC" id="6.3.2.5"/>
    </reaction>
</comment>
<comment type="cofactor">
    <cofactor evidence="1">
        <name>Mg(2+)</name>
        <dbReference type="ChEBI" id="CHEBI:18420"/>
    </cofactor>
</comment>
<comment type="cofactor">
    <cofactor evidence="1">
        <name>FMN</name>
        <dbReference type="ChEBI" id="CHEBI:58210"/>
    </cofactor>
    <text evidence="1">Binds 1 FMN per subunit.</text>
</comment>
<comment type="pathway">
    <text evidence="1">Cofactor biosynthesis; coenzyme A biosynthesis; CoA from (R)-pantothenate: step 2/5.</text>
</comment>
<comment type="pathway">
    <text evidence="1">Cofactor biosynthesis; coenzyme A biosynthesis; CoA from (R)-pantothenate: step 3/5.</text>
</comment>
<comment type="similarity">
    <text evidence="1">In the N-terminal section; belongs to the HFCD (homo-oligomeric flavin containing Cys decarboxylase) superfamily.</text>
</comment>
<comment type="similarity">
    <text evidence="1">In the C-terminal section; belongs to the PPC synthetase family.</text>
</comment>
<reference key="1">
    <citation type="journal article" date="2000" name="Nature">
        <title>DNA sequence of both chromosomes of the cholera pathogen Vibrio cholerae.</title>
        <authorList>
            <person name="Heidelberg J.F."/>
            <person name="Eisen J.A."/>
            <person name="Nelson W.C."/>
            <person name="Clayton R.A."/>
            <person name="Gwinn M.L."/>
            <person name="Dodson R.J."/>
            <person name="Haft D.H."/>
            <person name="Hickey E.K."/>
            <person name="Peterson J.D."/>
            <person name="Umayam L.A."/>
            <person name="Gill S.R."/>
            <person name="Nelson K.E."/>
            <person name="Read T.D."/>
            <person name="Tettelin H."/>
            <person name="Richardson D.L."/>
            <person name="Ermolaeva M.D."/>
            <person name="Vamathevan J.J."/>
            <person name="Bass S."/>
            <person name="Qin H."/>
            <person name="Dragoi I."/>
            <person name="Sellers P."/>
            <person name="McDonald L.A."/>
            <person name="Utterback T.R."/>
            <person name="Fleischmann R.D."/>
            <person name="Nierman W.C."/>
            <person name="White O."/>
            <person name="Salzberg S.L."/>
            <person name="Smith H.O."/>
            <person name="Colwell R.R."/>
            <person name="Mekalanos J.J."/>
            <person name="Venter J.C."/>
            <person name="Fraser C.M."/>
        </authorList>
    </citation>
    <scope>NUCLEOTIDE SEQUENCE [LARGE SCALE GENOMIC DNA]</scope>
    <source>
        <strain>ATCC 39315 / El Tor Inaba N16961</strain>
    </source>
</reference>
<feature type="chain" id="PRO_0000182024" description="Coenzyme A biosynthesis bifunctional protein CoaBC">
    <location>
        <begin position="1"/>
        <end position="399"/>
    </location>
</feature>
<feature type="region of interest" description="Phosphopantothenoylcysteine decarboxylase" evidence="1">
    <location>
        <begin position="1"/>
        <end position="190"/>
    </location>
</feature>
<feature type="region of interest" description="Phosphopantothenate--cysteine ligase" evidence="1">
    <location>
        <begin position="191"/>
        <end position="399"/>
    </location>
</feature>
<feature type="active site" description="Proton donor" evidence="1">
    <location>
        <position position="159"/>
    </location>
</feature>
<feature type="binding site" evidence="1">
    <location>
        <position position="279"/>
    </location>
    <ligand>
        <name>CTP</name>
        <dbReference type="ChEBI" id="CHEBI:37563"/>
    </ligand>
</feature>
<feature type="binding site" evidence="1">
    <location>
        <position position="289"/>
    </location>
    <ligand>
        <name>CTP</name>
        <dbReference type="ChEBI" id="CHEBI:37563"/>
    </ligand>
</feature>
<feature type="binding site" evidence="1">
    <location>
        <begin position="307"/>
        <end position="310"/>
    </location>
    <ligand>
        <name>CTP</name>
        <dbReference type="ChEBI" id="CHEBI:37563"/>
    </ligand>
</feature>
<feature type="binding site" evidence="1">
    <location>
        <position position="326"/>
    </location>
    <ligand>
        <name>CTP</name>
        <dbReference type="ChEBI" id="CHEBI:37563"/>
    </ligand>
</feature>
<feature type="binding site" evidence="1">
    <location>
        <position position="340"/>
    </location>
    <ligand>
        <name>CTP</name>
        <dbReference type="ChEBI" id="CHEBI:37563"/>
    </ligand>
</feature>
<feature type="binding site" evidence="1">
    <location>
        <position position="344"/>
    </location>
    <ligand>
        <name>CTP</name>
        <dbReference type="ChEBI" id="CHEBI:37563"/>
    </ligand>
</feature>
<organism>
    <name type="scientific">Vibrio cholerae serotype O1 (strain ATCC 39315 / El Tor Inaba N16961)</name>
    <dbReference type="NCBI Taxonomy" id="243277"/>
    <lineage>
        <taxon>Bacteria</taxon>
        <taxon>Pseudomonadati</taxon>
        <taxon>Pseudomonadota</taxon>
        <taxon>Gammaproteobacteria</taxon>
        <taxon>Vibrionales</taxon>
        <taxon>Vibrionaceae</taxon>
        <taxon>Vibrio</taxon>
    </lineage>
</organism>